<comment type="function">
    <text evidence="1">Catalyzes the methyl esterification of L-isoaspartyl residues in peptides and proteins that result from spontaneous decomposition of normal L-aspartyl and L-asparaginyl residues. It plays a role in the repair and/or degradation of damaged proteins.</text>
</comment>
<comment type="catalytic activity">
    <reaction evidence="1">
        <text>[protein]-L-isoaspartate + S-adenosyl-L-methionine = [protein]-L-isoaspartate alpha-methyl ester + S-adenosyl-L-homocysteine</text>
        <dbReference type="Rhea" id="RHEA:12705"/>
        <dbReference type="Rhea" id="RHEA-COMP:12143"/>
        <dbReference type="Rhea" id="RHEA-COMP:12144"/>
        <dbReference type="ChEBI" id="CHEBI:57856"/>
        <dbReference type="ChEBI" id="CHEBI:59789"/>
        <dbReference type="ChEBI" id="CHEBI:90596"/>
        <dbReference type="ChEBI" id="CHEBI:90598"/>
        <dbReference type="EC" id="2.1.1.77"/>
    </reaction>
</comment>
<comment type="subcellular location">
    <subcellularLocation>
        <location evidence="1">Cytoplasm</location>
    </subcellularLocation>
</comment>
<comment type="similarity">
    <text evidence="1">Belongs to the methyltransferase superfamily. L-isoaspartyl/D-aspartyl protein methyltransferase family.</text>
</comment>
<organism>
    <name type="scientific">Bordetella parapertussis (strain 12822 / ATCC BAA-587 / NCTC 13253)</name>
    <dbReference type="NCBI Taxonomy" id="257311"/>
    <lineage>
        <taxon>Bacteria</taxon>
        <taxon>Pseudomonadati</taxon>
        <taxon>Pseudomonadota</taxon>
        <taxon>Betaproteobacteria</taxon>
        <taxon>Burkholderiales</taxon>
        <taxon>Alcaligenaceae</taxon>
        <taxon>Bordetella</taxon>
    </lineage>
</organism>
<sequence>MRKRVDPPAGGRLAPGITPANSNTRISAGALPRAPAQPAPLASGNLGLNSDRLRQAMVQRLRTQGIVDERVLNAMAAVPRHLFVDEALASRAYEDAALPIGHSQTISQPWVVARMIAAVCEDRAPARVLEVGAGCGYQAAVLAQIVREVHAIERIRGLYELARGHLRALRLATRVRLIHGDGMLGVPGVAPFDAIVVAAAGLAIPQALLDQLAPGGRLIAPEGSTHQRLVLIERTGATAWSRKELEAVRFVPLRAGIQS</sequence>
<name>PIMT_BORPA</name>
<gene>
    <name evidence="1" type="primary">pcm</name>
    <name type="ordered locus">BPP3056</name>
</gene>
<proteinExistence type="inferred from homology"/>
<protein>
    <recommendedName>
        <fullName evidence="1">Protein-L-isoaspartate O-methyltransferase</fullName>
        <ecNumber evidence="1">2.1.1.77</ecNumber>
    </recommendedName>
    <alternativeName>
        <fullName evidence="1">L-isoaspartyl protein carboxyl methyltransferase</fullName>
    </alternativeName>
    <alternativeName>
        <fullName evidence="1">Protein L-isoaspartyl methyltransferase</fullName>
    </alternativeName>
    <alternativeName>
        <fullName evidence="1">Protein-beta-aspartate methyltransferase</fullName>
        <shortName evidence="1">PIMT</shortName>
    </alternativeName>
</protein>
<keyword id="KW-0963">Cytoplasm</keyword>
<keyword id="KW-0489">Methyltransferase</keyword>
<keyword id="KW-0949">S-adenosyl-L-methionine</keyword>
<keyword id="KW-0808">Transferase</keyword>
<accession>Q7W671</accession>
<evidence type="ECO:0000255" key="1">
    <source>
        <dbReference type="HAMAP-Rule" id="MF_00090"/>
    </source>
</evidence>
<evidence type="ECO:0000256" key="2">
    <source>
        <dbReference type="SAM" id="MobiDB-lite"/>
    </source>
</evidence>
<reference key="1">
    <citation type="journal article" date="2003" name="Nat. Genet.">
        <title>Comparative analysis of the genome sequences of Bordetella pertussis, Bordetella parapertussis and Bordetella bronchiseptica.</title>
        <authorList>
            <person name="Parkhill J."/>
            <person name="Sebaihia M."/>
            <person name="Preston A."/>
            <person name="Murphy L.D."/>
            <person name="Thomson N.R."/>
            <person name="Harris D.E."/>
            <person name="Holden M.T.G."/>
            <person name="Churcher C.M."/>
            <person name="Bentley S.D."/>
            <person name="Mungall K.L."/>
            <person name="Cerdeno-Tarraga A.-M."/>
            <person name="Temple L."/>
            <person name="James K.D."/>
            <person name="Harris B."/>
            <person name="Quail M.A."/>
            <person name="Achtman M."/>
            <person name="Atkin R."/>
            <person name="Baker S."/>
            <person name="Basham D."/>
            <person name="Bason N."/>
            <person name="Cherevach I."/>
            <person name="Chillingworth T."/>
            <person name="Collins M."/>
            <person name="Cronin A."/>
            <person name="Davis P."/>
            <person name="Doggett J."/>
            <person name="Feltwell T."/>
            <person name="Goble A."/>
            <person name="Hamlin N."/>
            <person name="Hauser H."/>
            <person name="Holroyd S."/>
            <person name="Jagels K."/>
            <person name="Leather S."/>
            <person name="Moule S."/>
            <person name="Norberczak H."/>
            <person name="O'Neil S."/>
            <person name="Ormond D."/>
            <person name="Price C."/>
            <person name="Rabbinowitsch E."/>
            <person name="Rutter S."/>
            <person name="Sanders M."/>
            <person name="Saunders D."/>
            <person name="Seeger K."/>
            <person name="Sharp S."/>
            <person name="Simmonds M."/>
            <person name="Skelton J."/>
            <person name="Squares R."/>
            <person name="Squares S."/>
            <person name="Stevens K."/>
            <person name="Unwin L."/>
            <person name="Whitehead S."/>
            <person name="Barrell B.G."/>
            <person name="Maskell D.J."/>
        </authorList>
    </citation>
    <scope>NUCLEOTIDE SEQUENCE [LARGE SCALE GENOMIC DNA]</scope>
    <source>
        <strain>12822 / ATCC BAA-587 / NCTC 13253</strain>
    </source>
</reference>
<feature type="chain" id="PRO_0000351820" description="Protein-L-isoaspartate O-methyltransferase">
    <location>
        <begin position="1"/>
        <end position="259"/>
    </location>
</feature>
<feature type="region of interest" description="Disordered" evidence="2">
    <location>
        <begin position="1"/>
        <end position="25"/>
    </location>
</feature>
<feature type="active site" evidence="1">
    <location>
        <position position="107"/>
    </location>
</feature>
<dbReference type="EC" id="2.1.1.77" evidence="1"/>
<dbReference type="EMBL" id="BX640432">
    <property type="protein sequence ID" value="CAE38343.1"/>
    <property type="molecule type" value="Genomic_DNA"/>
</dbReference>
<dbReference type="RefSeq" id="WP_010928874.1">
    <property type="nucleotide sequence ID" value="NC_002928.3"/>
</dbReference>
<dbReference type="SMR" id="Q7W671"/>
<dbReference type="GeneID" id="93204838"/>
<dbReference type="KEGG" id="bpa:BPP3056"/>
<dbReference type="HOGENOM" id="CLU_055432_1_0_4"/>
<dbReference type="Proteomes" id="UP000001421">
    <property type="component" value="Chromosome"/>
</dbReference>
<dbReference type="GO" id="GO:0005737">
    <property type="term" value="C:cytoplasm"/>
    <property type="evidence" value="ECO:0007669"/>
    <property type="project" value="UniProtKB-SubCell"/>
</dbReference>
<dbReference type="GO" id="GO:0004719">
    <property type="term" value="F:protein-L-isoaspartate (D-aspartate) O-methyltransferase activity"/>
    <property type="evidence" value="ECO:0007669"/>
    <property type="project" value="UniProtKB-UniRule"/>
</dbReference>
<dbReference type="GO" id="GO:0032259">
    <property type="term" value="P:methylation"/>
    <property type="evidence" value="ECO:0007669"/>
    <property type="project" value="UniProtKB-KW"/>
</dbReference>
<dbReference type="GO" id="GO:0036211">
    <property type="term" value="P:protein modification process"/>
    <property type="evidence" value="ECO:0007669"/>
    <property type="project" value="UniProtKB-UniRule"/>
</dbReference>
<dbReference type="GO" id="GO:0030091">
    <property type="term" value="P:protein repair"/>
    <property type="evidence" value="ECO:0007669"/>
    <property type="project" value="UniProtKB-UniRule"/>
</dbReference>
<dbReference type="CDD" id="cd02440">
    <property type="entry name" value="AdoMet_MTases"/>
    <property type="match status" value="1"/>
</dbReference>
<dbReference type="FunFam" id="3.40.50.150:FF:000010">
    <property type="entry name" value="Protein-L-isoaspartate O-methyltransferase"/>
    <property type="match status" value="1"/>
</dbReference>
<dbReference type="Gene3D" id="3.40.50.150">
    <property type="entry name" value="Vaccinia Virus protein VP39"/>
    <property type="match status" value="1"/>
</dbReference>
<dbReference type="HAMAP" id="MF_00090">
    <property type="entry name" value="PIMT"/>
    <property type="match status" value="1"/>
</dbReference>
<dbReference type="InterPro" id="IPR000682">
    <property type="entry name" value="PCMT"/>
</dbReference>
<dbReference type="InterPro" id="IPR029063">
    <property type="entry name" value="SAM-dependent_MTases_sf"/>
</dbReference>
<dbReference type="NCBIfam" id="TIGR00080">
    <property type="entry name" value="pimt"/>
    <property type="match status" value="1"/>
</dbReference>
<dbReference type="NCBIfam" id="NF001453">
    <property type="entry name" value="PRK00312.1"/>
    <property type="match status" value="1"/>
</dbReference>
<dbReference type="PANTHER" id="PTHR11579">
    <property type="entry name" value="PROTEIN-L-ISOASPARTATE O-METHYLTRANSFERASE"/>
    <property type="match status" value="1"/>
</dbReference>
<dbReference type="PANTHER" id="PTHR11579:SF0">
    <property type="entry name" value="PROTEIN-L-ISOASPARTATE(D-ASPARTATE) O-METHYLTRANSFERASE"/>
    <property type="match status" value="1"/>
</dbReference>
<dbReference type="Pfam" id="PF01135">
    <property type="entry name" value="PCMT"/>
    <property type="match status" value="1"/>
</dbReference>
<dbReference type="SUPFAM" id="SSF53335">
    <property type="entry name" value="S-adenosyl-L-methionine-dependent methyltransferases"/>
    <property type="match status" value="1"/>
</dbReference>
<dbReference type="PROSITE" id="PS01279">
    <property type="entry name" value="PCMT"/>
    <property type="match status" value="1"/>
</dbReference>